<feature type="chain" id="PRO_1000023534" description="3-dehydroquinate dehydratase">
    <location>
        <begin position="1"/>
        <end position="150"/>
    </location>
</feature>
<feature type="active site" description="Proton acceptor" evidence="1">
    <location>
        <position position="26"/>
    </location>
</feature>
<feature type="active site" description="Proton donor" evidence="1">
    <location>
        <position position="103"/>
    </location>
</feature>
<feature type="binding site" evidence="1">
    <location>
        <position position="77"/>
    </location>
    <ligand>
        <name>substrate</name>
    </ligand>
</feature>
<feature type="binding site" evidence="1">
    <location>
        <position position="83"/>
    </location>
    <ligand>
        <name>substrate</name>
    </ligand>
</feature>
<feature type="binding site" evidence="1">
    <location>
        <position position="90"/>
    </location>
    <ligand>
        <name>substrate</name>
    </ligand>
</feature>
<feature type="binding site" evidence="1">
    <location>
        <begin position="104"/>
        <end position="105"/>
    </location>
    <ligand>
        <name>substrate</name>
    </ligand>
</feature>
<feature type="binding site" evidence="1">
    <location>
        <position position="114"/>
    </location>
    <ligand>
        <name>substrate</name>
    </ligand>
</feature>
<feature type="site" description="Transition state stabilizer" evidence="1">
    <location>
        <position position="21"/>
    </location>
</feature>
<protein>
    <recommendedName>
        <fullName evidence="1">3-dehydroquinate dehydratase</fullName>
        <shortName evidence="1">3-dehydroquinase</shortName>
        <ecNumber evidence="1">4.2.1.10</ecNumber>
    </recommendedName>
    <alternativeName>
        <fullName evidence="1">Type II DHQase</fullName>
    </alternativeName>
</protein>
<gene>
    <name evidence="1" type="primary">aroQ</name>
    <name type="ordered locus">YE3810</name>
</gene>
<proteinExistence type="inferred from homology"/>
<accession>A1JRK0</accession>
<name>AROQ_YERE8</name>
<organism>
    <name type="scientific">Yersinia enterocolitica serotype O:8 / biotype 1B (strain NCTC 13174 / 8081)</name>
    <dbReference type="NCBI Taxonomy" id="393305"/>
    <lineage>
        <taxon>Bacteria</taxon>
        <taxon>Pseudomonadati</taxon>
        <taxon>Pseudomonadota</taxon>
        <taxon>Gammaproteobacteria</taxon>
        <taxon>Enterobacterales</taxon>
        <taxon>Yersiniaceae</taxon>
        <taxon>Yersinia</taxon>
    </lineage>
</organism>
<reference key="1">
    <citation type="journal article" date="2006" name="PLoS Genet.">
        <title>The complete genome sequence and comparative genome analysis of the high pathogenicity Yersinia enterocolitica strain 8081.</title>
        <authorList>
            <person name="Thomson N.R."/>
            <person name="Howard S."/>
            <person name="Wren B.W."/>
            <person name="Holden M.T.G."/>
            <person name="Crossman L."/>
            <person name="Challis G.L."/>
            <person name="Churcher C."/>
            <person name="Mungall K."/>
            <person name="Brooks K."/>
            <person name="Chillingworth T."/>
            <person name="Feltwell T."/>
            <person name="Abdellah Z."/>
            <person name="Hauser H."/>
            <person name="Jagels K."/>
            <person name="Maddison M."/>
            <person name="Moule S."/>
            <person name="Sanders M."/>
            <person name="Whitehead S."/>
            <person name="Quail M.A."/>
            <person name="Dougan G."/>
            <person name="Parkhill J."/>
            <person name="Prentice M.B."/>
        </authorList>
    </citation>
    <scope>NUCLEOTIDE SEQUENCE [LARGE SCALE GENOMIC DNA]</scope>
    <source>
        <strain>NCTC 13174 / 8081</strain>
    </source>
</reference>
<evidence type="ECO:0000255" key="1">
    <source>
        <dbReference type="HAMAP-Rule" id="MF_00169"/>
    </source>
</evidence>
<comment type="function">
    <text evidence="1">Catalyzes a trans-dehydration via an enolate intermediate.</text>
</comment>
<comment type="catalytic activity">
    <reaction evidence="1">
        <text>3-dehydroquinate = 3-dehydroshikimate + H2O</text>
        <dbReference type="Rhea" id="RHEA:21096"/>
        <dbReference type="ChEBI" id="CHEBI:15377"/>
        <dbReference type="ChEBI" id="CHEBI:16630"/>
        <dbReference type="ChEBI" id="CHEBI:32364"/>
        <dbReference type="EC" id="4.2.1.10"/>
    </reaction>
</comment>
<comment type="pathway">
    <text evidence="1">Metabolic intermediate biosynthesis; chorismate biosynthesis; chorismate from D-erythrose 4-phosphate and phosphoenolpyruvate: step 3/7.</text>
</comment>
<comment type="subunit">
    <text evidence="1">Homododecamer.</text>
</comment>
<comment type="similarity">
    <text evidence="1">Belongs to the type-II 3-dehydroquinase family.</text>
</comment>
<dbReference type="EC" id="4.2.1.10" evidence="1"/>
<dbReference type="EMBL" id="AM286415">
    <property type="protein sequence ID" value="CAL13834.1"/>
    <property type="molecule type" value="Genomic_DNA"/>
</dbReference>
<dbReference type="RefSeq" id="WP_005174343.1">
    <property type="nucleotide sequence ID" value="NC_008800.1"/>
</dbReference>
<dbReference type="RefSeq" id="YP_001007961.1">
    <property type="nucleotide sequence ID" value="NC_008800.1"/>
</dbReference>
<dbReference type="SMR" id="A1JRK0"/>
<dbReference type="KEGG" id="yen:YE3810"/>
<dbReference type="PATRIC" id="fig|393305.7.peg.4057"/>
<dbReference type="eggNOG" id="COG0757">
    <property type="taxonomic scope" value="Bacteria"/>
</dbReference>
<dbReference type="HOGENOM" id="CLU_090968_1_0_6"/>
<dbReference type="OrthoDB" id="9790793at2"/>
<dbReference type="UniPathway" id="UPA00053">
    <property type="reaction ID" value="UER00086"/>
</dbReference>
<dbReference type="Proteomes" id="UP000000642">
    <property type="component" value="Chromosome"/>
</dbReference>
<dbReference type="GO" id="GO:0003855">
    <property type="term" value="F:3-dehydroquinate dehydratase activity"/>
    <property type="evidence" value="ECO:0007669"/>
    <property type="project" value="UniProtKB-UniRule"/>
</dbReference>
<dbReference type="GO" id="GO:0008652">
    <property type="term" value="P:amino acid biosynthetic process"/>
    <property type="evidence" value="ECO:0007669"/>
    <property type="project" value="UniProtKB-KW"/>
</dbReference>
<dbReference type="GO" id="GO:0009073">
    <property type="term" value="P:aromatic amino acid family biosynthetic process"/>
    <property type="evidence" value="ECO:0007669"/>
    <property type="project" value="UniProtKB-KW"/>
</dbReference>
<dbReference type="GO" id="GO:0009423">
    <property type="term" value="P:chorismate biosynthetic process"/>
    <property type="evidence" value="ECO:0007669"/>
    <property type="project" value="UniProtKB-UniRule"/>
</dbReference>
<dbReference type="GO" id="GO:0019631">
    <property type="term" value="P:quinate catabolic process"/>
    <property type="evidence" value="ECO:0007669"/>
    <property type="project" value="TreeGrafter"/>
</dbReference>
<dbReference type="CDD" id="cd00466">
    <property type="entry name" value="DHQase_II"/>
    <property type="match status" value="1"/>
</dbReference>
<dbReference type="Gene3D" id="3.40.50.9100">
    <property type="entry name" value="Dehydroquinase, class II"/>
    <property type="match status" value="1"/>
</dbReference>
<dbReference type="HAMAP" id="MF_00169">
    <property type="entry name" value="AroQ"/>
    <property type="match status" value="1"/>
</dbReference>
<dbReference type="InterPro" id="IPR001874">
    <property type="entry name" value="DHquinase_II"/>
</dbReference>
<dbReference type="InterPro" id="IPR018509">
    <property type="entry name" value="DHquinase_II_CS"/>
</dbReference>
<dbReference type="InterPro" id="IPR036441">
    <property type="entry name" value="DHquinase_II_sf"/>
</dbReference>
<dbReference type="NCBIfam" id="TIGR01088">
    <property type="entry name" value="aroQ"/>
    <property type="match status" value="1"/>
</dbReference>
<dbReference type="NCBIfam" id="NF003804">
    <property type="entry name" value="PRK05395.1-1"/>
    <property type="match status" value="1"/>
</dbReference>
<dbReference type="NCBIfam" id="NF003805">
    <property type="entry name" value="PRK05395.1-2"/>
    <property type="match status" value="1"/>
</dbReference>
<dbReference type="NCBIfam" id="NF003806">
    <property type="entry name" value="PRK05395.1-3"/>
    <property type="match status" value="1"/>
</dbReference>
<dbReference type="NCBIfam" id="NF003807">
    <property type="entry name" value="PRK05395.1-4"/>
    <property type="match status" value="1"/>
</dbReference>
<dbReference type="PANTHER" id="PTHR21272">
    <property type="entry name" value="CATABOLIC 3-DEHYDROQUINASE"/>
    <property type="match status" value="1"/>
</dbReference>
<dbReference type="PANTHER" id="PTHR21272:SF3">
    <property type="entry name" value="CATABOLIC 3-DEHYDROQUINASE"/>
    <property type="match status" value="1"/>
</dbReference>
<dbReference type="Pfam" id="PF01220">
    <property type="entry name" value="DHquinase_II"/>
    <property type="match status" value="1"/>
</dbReference>
<dbReference type="PIRSF" id="PIRSF001399">
    <property type="entry name" value="DHquinase_II"/>
    <property type="match status" value="1"/>
</dbReference>
<dbReference type="SUPFAM" id="SSF52304">
    <property type="entry name" value="Type II 3-dehydroquinate dehydratase"/>
    <property type="match status" value="1"/>
</dbReference>
<dbReference type="PROSITE" id="PS01029">
    <property type="entry name" value="DEHYDROQUINASE_II"/>
    <property type="match status" value="1"/>
</dbReference>
<keyword id="KW-0028">Amino-acid biosynthesis</keyword>
<keyword id="KW-0057">Aromatic amino acid biosynthesis</keyword>
<keyword id="KW-0456">Lyase</keyword>
<sequence length="150" mass="16508">MSDKFHILLLNGPNLNLLGTREPEKYGYTTLTEIVSQLEAQAQGMDVVLSHLQSNAEHVLIDRIHQARGNTDFILINPAAFTHTSVALRDALLGVQIPFIEIHLSNVHAREPFRHHSYLSDIAVGVICGLGADGYNFALQAAVNRLSKSN</sequence>